<gene>
    <name evidence="1" type="primary">selA</name>
    <name type="ordered locus">STY4113</name>
    <name type="ordered locus">t3836</name>
</gene>
<protein>
    <recommendedName>
        <fullName evidence="1">L-seryl-tRNA(Sec) selenium transferase</fullName>
        <ecNumber evidence="1">2.9.1.1</ecNumber>
    </recommendedName>
    <alternativeName>
        <fullName evidence="1">Selenocysteine synthase</fullName>
        <shortName evidence="1">Sec synthase</shortName>
    </alternativeName>
    <alternativeName>
        <fullName evidence="1">Selenocysteinyl-tRNA(Sec) synthase</fullName>
    </alternativeName>
</protein>
<name>SELA_SALTI</name>
<reference key="1">
    <citation type="journal article" date="2001" name="Nature">
        <title>Complete genome sequence of a multiple drug resistant Salmonella enterica serovar Typhi CT18.</title>
        <authorList>
            <person name="Parkhill J."/>
            <person name="Dougan G."/>
            <person name="James K.D."/>
            <person name="Thomson N.R."/>
            <person name="Pickard D."/>
            <person name="Wain J."/>
            <person name="Churcher C.M."/>
            <person name="Mungall K.L."/>
            <person name="Bentley S.D."/>
            <person name="Holden M.T.G."/>
            <person name="Sebaihia M."/>
            <person name="Baker S."/>
            <person name="Basham D."/>
            <person name="Brooks K."/>
            <person name="Chillingworth T."/>
            <person name="Connerton P."/>
            <person name="Cronin A."/>
            <person name="Davis P."/>
            <person name="Davies R.M."/>
            <person name="Dowd L."/>
            <person name="White N."/>
            <person name="Farrar J."/>
            <person name="Feltwell T."/>
            <person name="Hamlin N."/>
            <person name="Haque A."/>
            <person name="Hien T.T."/>
            <person name="Holroyd S."/>
            <person name="Jagels K."/>
            <person name="Krogh A."/>
            <person name="Larsen T.S."/>
            <person name="Leather S."/>
            <person name="Moule S."/>
            <person name="O'Gaora P."/>
            <person name="Parry C."/>
            <person name="Quail M.A."/>
            <person name="Rutherford K.M."/>
            <person name="Simmonds M."/>
            <person name="Skelton J."/>
            <person name="Stevens K."/>
            <person name="Whitehead S."/>
            <person name="Barrell B.G."/>
        </authorList>
    </citation>
    <scope>NUCLEOTIDE SEQUENCE [LARGE SCALE GENOMIC DNA]</scope>
    <source>
        <strain>CT18</strain>
    </source>
</reference>
<reference key="2">
    <citation type="journal article" date="2003" name="J. Bacteriol.">
        <title>Comparative genomics of Salmonella enterica serovar Typhi strains Ty2 and CT18.</title>
        <authorList>
            <person name="Deng W."/>
            <person name="Liou S.-R."/>
            <person name="Plunkett G. III"/>
            <person name="Mayhew G.F."/>
            <person name="Rose D.J."/>
            <person name="Burland V."/>
            <person name="Kodoyianni V."/>
            <person name="Schwartz D.C."/>
            <person name="Blattner F.R."/>
        </authorList>
    </citation>
    <scope>NUCLEOTIDE SEQUENCE [LARGE SCALE GENOMIC DNA]</scope>
    <source>
        <strain>ATCC 700931 / Ty2</strain>
    </source>
</reference>
<keyword id="KW-0963">Cytoplasm</keyword>
<keyword id="KW-0648">Protein biosynthesis</keyword>
<keyword id="KW-0663">Pyridoxal phosphate</keyword>
<keyword id="KW-0711">Selenium</keyword>
<keyword id="KW-0808">Transferase</keyword>
<organism>
    <name type="scientific">Salmonella typhi</name>
    <dbReference type="NCBI Taxonomy" id="90370"/>
    <lineage>
        <taxon>Bacteria</taxon>
        <taxon>Pseudomonadati</taxon>
        <taxon>Pseudomonadota</taxon>
        <taxon>Gammaproteobacteria</taxon>
        <taxon>Enterobacterales</taxon>
        <taxon>Enterobacteriaceae</taxon>
        <taxon>Salmonella</taxon>
    </lineage>
</organism>
<comment type="function">
    <text evidence="1">Converts seryl-tRNA(Sec) to selenocysteinyl-tRNA(Sec) required for selenoprotein biosynthesis.</text>
</comment>
<comment type="catalytic activity">
    <reaction evidence="1">
        <text>L-seryl-tRNA(Sec) + selenophosphate + H(+) = L-selenocysteinyl-tRNA(Sec) + phosphate</text>
        <dbReference type="Rhea" id="RHEA:22728"/>
        <dbReference type="Rhea" id="RHEA-COMP:9742"/>
        <dbReference type="Rhea" id="RHEA-COMP:9743"/>
        <dbReference type="ChEBI" id="CHEBI:15378"/>
        <dbReference type="ChEBI" id="CHEBI:16144"/>
        <dbReference type="ChEBI" id="CHEBI:43474"/>
        <dbReference type="ChEBI" id="CHEBI:78533"/>
        <dbReference type="ChEBI" id="CHEBI:78573"/>
        <dbReference type="EC" id="2.9.1.1"/>
    </reaction>
</comment>
<comment type="cofactor">
    <cofactor evidence="1">
        <name>pyridoxal 5'-phosphate</name>
        <dbReference type="ChEBI" id="CHEBI:597326"/>
    </cofactor>
</comment>
<comment type="pathway">
    <text evidence="1">Aminoacyl-tRNA biosynthesis; selenocysteinyl-tRNA(Sec) biosynthesis; selenocysteinyl-tRNA(Sec) from L-seryl-tRNA(Sec) (bacterial route): step 1/1.</text>
</comment>
<comment type="subunit">
    <text evidence="1">Homodecamer; pentamer of dimers. Binds only one seryl-tRNA(Sec) per dimer.</text>
</comment>
<comment type="subcellular location">
    <subcellularLocation>
        <location evidence="1">Cytoplasm</location>
    </subcellularLocation>
</comment>
<comment type="similarity">
    <text evidence="1">Belongs to the SelA family.</text>
</comment>
<proteinExistence type="inferred from homology"/>
<sequence>MTSETRTLYSQLPAIDRLLHDSAFLSLRDRYGHTQVVDLLRRMLDDARDVIRNTQTLPDWYADWAQEAKLRLENAAQSALRPVINLTGTVLHTNLGRALQAQEAIEAVTQAMRAPVTLEYDLDGAGRGHRDRALATLLCRITGAEDACIVNNNAAAVLLMLAATASGKEVVVSRGELVEIGGAFRIPDVMRQAGCTLHEVGTTNRTHAKDYRQAVNENTGLLMKVHTSNYSIEGFTKTVEEAELAEIGRELDIPVVADLGSGSLVDLSQYGLPKEPMPQQLIAAGVSLVSFSGDKLLGGPQAGIIVGKKAMIAQLQSHPLKRALRADKMTLAALEATLRLYLHPEALAEKLPTLRLLTRSEASIREQAQRLQARLAARYGDEFALEVKPCLSQIGSGSLPVDRLPSAAMTFTPHDGRGSRLEALAARWRTLPVPVIGRIYDGRLWLDMRCLEDESRFMEMMLK</sequence>
<evidence type="ECO:0000255" key="1">
    <source>
        <dbReference type="HAMAP-Rule" id="MF_00423"/>
    </source>
</evidence>
<feature type="chain" id="PRO_0000189615" description="L-seryl-tRNA(Sec) selenium transferase">
    <location>
        <begin position="1"/>
        <end position="463"/>
    </location>
</feature>
<feature type="modified residue" description="N6-(pyridoxal phosphate)lysine" evidence="1">
    <location>
        <position position="295"/>
    </location>
</feature>
<accession>Q8Z2D8</accession>
<dbReference type="EC" id="2.9.1.1" evidence="1"/>
<dbReference type="EMBL" id="AL513382">
    <property type="protein sequence ID" value="CAD07943.1"/>
    <property type="molecule type" value="Genomic_DNA"/>
</dbReference>
<dbReference type="EMBL" id="AE014613">
    <property type="protein sequence ID" value="AAO71317.1"/>
    <property type="molecule type" value="Genomic_DNA"/>
</dbReference>
<dbReference type="RefSeq" id="NP_458243.1">
    <property type="nucleotide sequence ID" value="NC_003198.1"/>
</dbReference>
<dbReference type="RefSeq" id="WP_000200188.1">
    <property type="nucleotide sequence ID" value="NZ_WSUR01000001.1"/>
</dbReference>
<dbReference type="SMR" id="Q8Z2D8"/>
<dbReference type="STRING" id="220341.gene:17587955"/>
<dbReference type="KEGG" id="stt:t3836"/>
<dbReference type="KEGG" id="sty:STY4113"/>
<dbReference type="PATRIC" id="fig|220341.7.peg.4200"/>
<dbReference type="eggNOG" id="COG1921">
    <property type="taxonomic scope" value="Bacteria"/>
</dbReference>
<dbReference type="HOGENOM" id="CLU_038142_1_0_6"/>
<dbReference type="OMA" id="GATNRTH"/>
<dbReference type="OrthoDB" id="9787096at2"/>
<dbReference type="UniPathway" id="UPA00906">
    <property type="reaction ID" value="UER00896"/>
</dbReference>
<dbReference type="Proteomes" id="UP000000541">
    <property type="component" value="Chromosome"/>
</dbReference>
<dbReference type="Proteomes" id="UP000002670">
    <property type="component" value="Chromosome"/>
</dbReference>
<dbReference type="GO" id="GO:0005737">
    <property type="term" value="C:cytoplasm"/>
    <property type="evidence" value="ECO:0007669"/>
    <property type="project" value="UniProtKB-SubCell"/>
</dbReference>
<dbReference type="GO" id="GO:0004125">
    <property type="term" value="F:L-seryl-tRNA(Sec) selenium transferase activity"/>
    <property type="evidence" value="ECO:0007669"/>
    <property type="project" value="UniProtKB-UniRule"/>
</dbReference>
<dbReference type="GO" id="GO:0001717">
    <property type="term" value="P:conversion of seryl-tRNAsec to selenocys-tRNAsec"/>
    <property type="evidence" value="ECO:0007669"/>
    <property type="project" value="UniProtKB-UniRule"/>
</dbReference>
<dbReference type="GO" id="GO:0001514">
    <property type="term" value="P:selenocysteine incorporation"/>
    <property type="evidence" value="ECO:0007669"/>
    <property type="project" value="UniProtKB-UniRule"/>
</dbReference>
<dbReference type="FunFam" id="3.40.640.10:FF:000028">
    <property type="entry name" value="L-seryl-tRNA(Sec) selenium transferase"/>
    <property type="match status" value="1"/>
</dbReference>
<dbReference type="FunFam" id="3.90.1150.180:FF:000001">
    <property type="entry name" value="L-seryl-tRNA(Sec) selenium transferase"/>
    <property type="match status" value="1"/>
</dbReference>
<dbReference type="Gene3D" id="3.90.1150.180">
    <property type="match status" value="1"/>
</dbReference>
<dbReference type="Gene3D" id="3.40.640.10">
    <property type="entry name" value="Type I PLP-dependent aspartate aminotransferase-like (Major domain)"/>
    <property type="match status" value="1"/>
</dbReference>
<dbReference type="HAMAP" id="MF_00423">
    <property type="entry name" value="SelA"/>
    <property type="match status" value="1"/>
</dbReference>
<dbReference type="InterPro" id="IPR015424">
    <property type="entry name" value="PyrdxlP-dep_Trfase"/>
</dbReference>
<dbReference type="InterPro" id="IPR015421">
    <property type="entry name" value="PyrdxlP-dep_Trfase_major"/>
</dbReference>
<dbReference type="InterPro" id="IPR018319">
    <property type="entry name" value="SelA-like"/>
</dbReference>
<dbReference type="InterPro" id="IPR004534">
    <property type="entry name" value="SelA_trans"/>
</dbReference>
<dbReference type="InterPro" id="IPR025862">
    <property type="entry name" value="SelA_trans_N_dom"/>
</dbReference>
<dbReference type="NCBIfam" id="TIGR00474">
    <property type="entry name" value="selA"/>
    <property type="match status" value="1"/>
</dbReference>
<dbReference type="PANTHER" id="PTHR32328">
    <property type="entry name" value="L-SERYL-TRNA(SEC) SELENIUM TRANSFERASE"/>
    <property type="match status" value="1"/>
</dbReference>
<dbReference type="PANTHER" id="PTHR32328:SF0">
    <property type="entry name" value="L-SERYL-TRNA(SEC) SELENIUM TRANSFERASE"/>
    <property type="match status" value="1"/>
</dbReference>
<dbReference type="Pfam" id="PF12390">
    <property type="entry name" value="Se-cys_synth_N"/>
    <property type="match status" value="1"/>
</dbReference>
<dbReference type="Pfam" id="PF03841">
    <property type="entry name" value="SelA"/>
    <property type="match status" value="1"/>
</dbReference>
<dbReference type="SUPFAM" id="SSF53383">
    <property type="entry name" value="PLP-dependent transferases"/>
    <property type="match status" value="1"/>
</dbReference>